<feature type="chain" id="PRO_0000241110" description="Glutamyl-tRNA(Gln) amidotransferase subunit A">
    <location>
        <begin position="1"/>
        <end position="479"/>
    </location>
</feature>
<feature type="active site" description="Charge relay system" evidence="1">
    <location>
        <position position="71"/>
    </location>
</feature>
<feature type="active site" description="Charge relay system" evidence="1">
    <location>
        <position position="146"/>
    </location>
</feature>
<feature type="active site" description="Acyl-ester intermediate" evidence="1">
    <location>
        <position position="170"/>
    </location>
</feature>
<proteinExistence type="inferred from homology"/>
<organism>
    <name type="scientific">Lactobacillus acidophilus (strain ATCC 700396 / NCK56 / N2 / NCFM)</name>
    <dbReference type="NCBI Taxonomy" id="272621"/>
    <lineage>
        <taxon>Bacteria</taxon>
        <taxon>Bacillati</taxon>
        <taxon>Bacillota</taxon>
        <taxon>Bacilli</taxon>
        <taxon>Lactobacillales</taxon>
        <taxon>Lactobacillaceae</taxon>
        <taxon>Lactobacillus</taxon>
    </lineage>
</organism>
<accession>Q5FLL1</accession>
<reference key="1">
    <citation type="journal article" date="2005" name="Proc. Natl. Acad. Sci. U.S.A.">
        <title>Complete genome sequence of the probiotic lactic acid bacterium Lactobacillus acidophilus NCFM.</title>
        <authorList>
            <person name="Altermann E."/>
            <person name="Russell W.M."/>
            <person name="Azcarate-Peril M.A."/>
            <person name="Barrangou R."/>
            <person name="Buck B.L."/>
            <person name="McAuliffe O."/>
            <person name="Souther N."/>
            <person name="Dobson A."/>
            <person name="Duong T."/>
            <person name="Callanan M."/>
            <person name="Lick S."/>
            <person name="Hamrick A."/>
            <person name="Cano R."/>
            <person name="Klaenhammer T.R."/>
        </authorList>
    </citation>
    <scope>NUCLEOTIDE SEQUENCE [LARGE SCALE GENOMIC DNA]</scope>
    <source>
        <strain>ATCC 700396 / NCK56 / N2 / NCFM</strain>
    </source>
</reference>
<dbReference type="EC" id="6.3.5.7" evidence="1"/>
<dbReference type="EMBL" id="CP000033">
    <property type="protein sequence ID" value="AAV42413.1"/>
    <property type="molecule type" value="Genomic_DNA"/>
</dbReference>
<dbReference type="RefSeq" id="WP_003546285.1">
    <property type="nucleotide sequence ID" value="NC_006814.3"/>
</dbReference>
<dbReference type="RefSeq" id="YP_193444.1">
    <property type="nucleotide sequence ID" value="NC_006814.3"/>
</dbReference>
<dbReference type="SMR" id="Q5FLL1"/>
<dbReference type="STRING" id="272621.LBA0532"/>
<dbReference type="KEGG" id="lac:LBA0532"/>
<dbReference type="PATRIC" id="fig|272621.13.peg.507"/>
<dbReference type="eggNOG" id="COG0154">
    <property type="taxonomic scope" value="Bacteria"/>
</dbReference>
<dbReference type="HOGENOM" id="CLU_009600_0_3_9"/>
<dbReference type="OrthoDB" id="9811471at2"/>
<dbReference type="BioCyc" id="LACI272621:G1G49-555-MONOMER"/>
<dbReference type="Proteomes" id="UP000006381">
    <property type="component" value="Chromosome"/>
</dbReference>
<dbReference type="GO" id="GO:0030956">
    <property type="term" value="C:glutamyl-tRNA(Gln) amidotransferase complex"/>
    <property type="evidence" value="ECO:0007669"/>
    <property type="project" value="InterPro"/>
</dbReference>
<dbReference type="GO" id="GO:0005524">
    <property type="term" value="F:ATP binding"/>
    <property type="evidence" value="ECO:0007669"/>
    <property type="project" value="UniProtKB-KW"/>
</dbReference>
<dbReference type="GO" id="GO:0050567">
    <property type="term" value="F:glutaminyl-tRNA synthase (glutamine-hydrolyzing) activity"/>
    <property type="evidence" value="ECO:0007669"/>
    <property type="project" value="UniProtKB-UniRule"/>
</dbReference>
<dbReference type="GO" id="GO:0006412">
    <property type="term" value="P:translation"/>
    <property type="evidence" value="ECO:0007669"/>
    <property type="project" value="UniProtKB-UniRule"/>
</dbReference>
<dbReference type="Gene3D" id="3.90.1300.10">
    <property type="entry name" value="Amidase signature (AS) domain"/>
    <property type="match status" value="1"/>
</dbReference>
<dbReference type="HAMAP" id="MF_00120">
    <property type="entry name" value="GatA"/>
    <property type="match status" value="1"/>
</dbReference>
<dbReference type="InterPro" id="IPR000120">
    <property type="entry name" value="Amidase"/>
</dbReference>
<dbReference type="InterPro" id="IPR020556">
    <property type="entry name" value="Amidase_CS"/>
</dbReference>
<dbReference type="InterPro" id="IPR023631">
    <property type="entry name" value="Amidase_dom"/>
</dbReference>
<dbReference type="InterPro" id="IPR036928">
    <property type="entry name" value="AS_sf"/>
</dbReference>
<dbReference type="InterPro" id="IPR004412">
    <property type="entry name" value="GatA"/>
</dbReference>
<dbReference type="NCBIfam" id="TIGR00132">
    <property type="entry name" value="gatA"/>
    <property type="match status" value="1"/>
</dbReference>
<dbReference type="PANTHER" id="PTHR11895:SF151">
    <property type="entry name" value="GLUTAMYL-TRNA(GLN) AMIDOTRANSFERASE SUBUNIT A"/>
    <property type="match status" value="1"/>
</dbReference>
<dbReference type="PANTHER" id="PTHR11895">
    <property type="entry name" value="TRANSAMIDASE"/>
    <property type="match status" value="1"/>
</dbReference>
<dbReference type="Pfam" id="PF01425">
    <property type="entry name" value="Amidase"/>
    <property type="match status" value="1"/>
</dbReference>
<dbReference type="SUPFAM" id="SSF75304">
    <property type="entry name" value="Amidase signature (AS) enzymes"/>
    <property type="match status" value="1"/>
</dbReference>
<dbReference type="PROSITE" id="PS00571">
    <property type="entry name" value="AMIDASES"/>
    <property type="match status" value="1"/>
</dbReference>
<name>GATA_LACAC</name>
<comment type="function">
    <text evidence="1">Allows the formation of correctly charged Gln-tRNA(Gln) through the transamidation of misacylated Glu-tRNA(Gln) in organisms which lack glutaminyl-tRNA synthetase. The reaction takes place in the presence of glutamine and ATP through an activated gamma-phospho-Glu-tRNA(Gln).</text>
</comment>
<comment type="catalytic activity">
    <reaction evidence="1">
        <text>L-glutamyl-tRNA(Gln) + L-glutamine + ATP + H2O = L-glutaminyl-tRNA(Gln) + L-glutamate + ADP + phosphate + H(+)</text>
        <dbReference type="Rhea" id="RHEA:17521"/>
        <dbReference type="Rhea" id="RHEA-COMP:9681"/>
        <dbReference type="Rhea" id="RHEA-COMP:9684"/>
        <dbReference type="ChEBI" id="CHEBI:15377"/>
        <dbReference type="ChEBI" id="CHEBI:15378"/>
        <dbReference type="ChEBI" id="CHEBI:29985"/>
        <dbReference type="ChEBI" id="CHEBI:30616"/>
        <dbReference type="ChEBI" id="CHEBI:43474"/>
        <dbReference type="ChEBI" id="CHEBI:58359"/>
        <dbReference type="ChEBI" id="CHEBI:78520"/>
        <dbReference type="ChEBI" id="CHEBI:78521"/>
        <dbReference type="ChEBI" id="CHEBI:456216"/>
        <dbReference type="EC" id="6.3.5.7"/>
    </reaction>
</comment>
<comment type="subunit">
    <text evidence="1">Heterotrimer of A, B and C subunits.</text>
</comment>
<comment type="similarity">
    <text evidence="1">Belongs to the amidase family. GatA subfamily.</text>
</comment>
<evidence type="ECO:0000255" key="1">
    <source>
        <dbReference type="HAMAP-Rule" id="MF_00120"/>
    </source>
</evidence>
<protein>
    <recommendedName>
        <fullName evidence="1">Glutamyl-tRNA(Gln) amidotransferase subunit A</fullName>
        <shortName evidence="1">Glu-ADT subunit A</shortName>
        <ecNumber evidence="1">6.3.5.7</ecNumber>
    </recommendedName>
</protein>
<keyword id="KW-0067">ATP-binding</keyword>
<keyword id="KW-0436">Ligase</keyword>
<keyword id="KW-0547">Nucleotide-binding</keyword>
<keyword id="KW-0648">Protein biosynthesis</keyword>
<keyword id="KW-1185">Reference proteome</keyword>
<gene>
    <name evidence="1" type="primary">gatA</name>
    <name type="ordered locus">LBA0532</name>
</gene>
<sequence>MNYLNENIDSLNKKLASGELSADKLAKDTVANIKETDKKLNAWITVLDDAKPAENLDYSKSKLAGIPIAIKDNIITNGVKTTAASHMLYNYMPMYDATVISKLKKAGATFVGKTNMDEFAMGSSTEHSYYGATHNPWNLDKVPGGSSGGSAAAVAGGQVVAALGSDTGGSIRQPAAFNGIFGIKPTYGRVSRWGLIAFGSSLDQIGVMTKRVKDSAEVLNVIAGGDEHDSTVSVREVPDFTKFIGQDVKGLRVAVPKEYMDAVSGEMREVIQKQIDTLKDAGAIINEVSLPHTKYAVPDYYIIASSEASSNLQRYDGIRYGYRAKDTKNLLDVYVKSRSEGFGTEIKRRIMLGSFALSAGSYDRFFRQAAKVRTLICDDFDKIFAENDVIVGPTTTEPAFGIGEEVSDPIKMYNNDILTISANLAGIPAASVPAGLVDGMPVGLQIMAKRFDEGSIFKTADFIERTNKFYEKTPTGMED</sequence>